<sequence length="203" mass="22085">MIGRLRGIIIEKQPPLVLIEVGGVGYEVHMPMTCFYELPEAGQEAIVFTHFVVREDAQLLYGFNNKQERTLFKELIKTNGVGPKLALAILSGMSAQQFVNAVEREEVGALVKLPGIGKKTAERLIVEMKDRFKGLHGDLFTPAADLVLTSPASPATNDAEQEAVAALVALGYKPQEASRMVSKIARPDASSETLIREALRAAL</sequence>
<protein>
    <recommendedName>
        <fullName evidence="1">Holliday junction branch migration complex subunit RuvA</fullName>
    </recommendedName>
</protein>
<keyword id="KW-0963">Cytoplasm</keyword>
<keyword id="KW-0227">DNA damage</keyword>
<keyword id="KW-0233">DNA recombination</keyword>
<keyword id="KW-0234">DNA repair</keyword>
<keyword id="KW-0238">DNA-binding</keyword>
<keyword id="KW-0742">SOS response</keyword>
<comment type="function">
    <text evidence="1">The RuvA-RuvB-RuvC complex processes Holliday junction (HJ) DNA during genetic recombination and DNA repair, while the RuvA-RuvB complex plays an important role in the rescue of blocked DNA replication forks via replication fork reversal (RFR). RuvA specifically binds to HJ cruciform DNA, conferring on it an open structure. The RuvB hexamer acts as an ATP-dependent pump, pulling dsDNA into and through the RuvAB complex. HJ branch migration allows RuvC to scan DNA until it finds its consensus sequence, where it cleaves and resolves the cruciform DNA.</text>
</comment>
<comment type="subunit">
    <text evidence="1">Homotetramer. Forms an RuvA(8)-RuvB(12)-Holliday junction (HJ) complex. HJ DNA is sandwiched between 2 RuvA tetramers; dsDNA enters through RuvA and exits via RuvB. An RuvB hexamer assembles on each DNA strand where it exits the tetramer. Each RuvB hexamer is contacted by two RuvA subunits (via domain III) on 2 adjacent RuvB subunits; this complex drives branch migration. In the full resolvosome a probable DNA-RuvA(4)-RuvB(12)-RuvC(2) complex forms which resolves the HJ.</text>
</comment>
<comment type="subcellular location">
    <subcellularLocation>
        <location evidence="1">Cytoplasm</location>
    </subcellularLocation>
</comment>
<comment type="domain">
    <text evidence="1">Has three domains with a flexible linker between the domains II and III and assumes an 'L' shape. Domain III is highly mobile and contacts RuvB.</text>
</comment>
<comment type="similarity">
    <text evidence="1">Belongs to the RuvA family.</text>
</comment>
<organism>
    <name type="scientific">Escherichia coli (strain ATCC 8739 / DSM 1576 / NBRC 3972 / NCIMB 8545 / WDCM 00012 / Crooks)</name>
    <dbReference type="NCBI Taxonomy" id="481805"/>
    <lineage>
        <taxon>Bacteria</taxon>
        <taxon>Pseudomonadati</taxon>
        <taxon>Pseudomonadota</taxon>
        <taxon>Gammaproteobacteria</taxon>
        <taxon>Enterobacterales</taxon>
        <taxon>Enterobacteriaceae</taxon>
        <taxon>Escherichia</taxon>
    </lineage>
</organism>
<proteinExistence type="inferred from homology"/>
<name>RUVA_ECOLC</name>
<gene>
    <name evidence="1" type="primary">ruvA</name>
    <name type="ordered locus">EcolC_1771</name>
</gene>
<evidence type="ECO:0000255" key="1">
    <source>
        <dbReference type="HAMAP-Rule" id="MF_00031"/>
    </source>
</evidence>
<dbReference type="EMBL" id="CP000946">
    <property type="protein sequence ID" value="ACA77421.1"/>
    <property type="molecule type" value="Genomic_DNA"/>
</dbReference>
<dbReference type="RefSeq" id="WP_000580327.1">
    <property type="nucleotide sequence ID" value="NZ_MTFT01000011.1"/>
</dbReference>
<dbReference type="SMR" id="B1J0M7"/>
<dbReference type="KEGG" id="ecl:EcolC_1771"/>
<dbReference type="HOGENOM" id="CLU_087936_0_0_6"/>
<dbReference type="GO" id="GO:0005737">
    <property type="term" value="C:cytoplasm"/>
    <property type="evidence" value="ECO:0007669"/>
    <property type="project" value="UniProtKB-SubCell"/>
</dbReference>
<dbReference type="GO" id="GO:0009379">
    <property type="term" value="C:Holliday junction helicase complex"/>
    <property type="evidence" value="ECO:0007669"/>
    <property type="project" value="InterPro"/>
</dbReference>
<dbReference type="GO" id="GO:0048476">
    <property type="term" value="C:Holliday junction resolvase complex"/>
    <property type="evidence" value="ECO:0007669"/>
    <property type="project" value="UniProtKB-UniRule"/>
</dbReference>
<dbReference type="GO" id="GO:0005524">
    <property type="term" value="F:ATP binding"/>
    <property type="evidence" value="ECO:0007669"/>
    <property type="project" value="InterPro"/>
</dbReference>
<dbReference type="GO" id="GO:0000400">
    <property type="term" value="F:four-way junction DNA binding"/>
    <property type="evidence" value="ECO:0007669"/>
    <property type="project" value="UniProtKB-UniRule"/>
</dbReference>
<dbReference type="GO" id="GO:0009378">
    <property type="term" value="F:four-way junction helicase activity"/>
    <property type="evidence" value="ECO:0007669"/>
    <property type="project" value="InterPro"/>
</dbReference>
<dbReference type="GO" id="GO:0006310">
    <property type="term" value="P:DNA recombination"/>
    <property type="evidence" value="ECO:0007669"/>
    <property type="project" value="UniProtKB-UniRule"/>
</dbReference>
<dbReference type="GO" id="GO:0006281">
    <property type="term" value="P:DNA repair"/>
    <property type="evidence" value="ECO:0007669"/>
    <property type="project" value="UniProtKB-UniRule"/>
</dbReference>
<dbReference type="GO" id="GO:0009432">
    <property type="term" value="P:SOS response"/>
    <property type="evidence" value="ECO:0007669"/>
    <property type="project" value="UniProtKB-UniRule"/>
</dbReference>
<dbReference type="CDD" id="cd14332">
    <property type="entry name" value="UBA_RuvA_C"/>
    <property type="match status" value="1"/>
</dbReference>
<dbReference type="FunFam" id="1.10.150.20:FF:000012">
    <property type="entry name" value="Holliday junction ATP-dependent DNA helicase RuvA"/>
    <property type="match status" value="1"/>
</dbReference>
<dbReference type="FunFam" id="1.10.8.10:FF:000008">
    <property type="entry name" value="Holliday junction ATP-dependent DNA helicase RuvA"/>
    <property type="match status" value="1"/>
</dbReference>
<dbReference type="FunFam" id="2.40.50.140:FF:000083">
    <property type="entry name" value="Holliday junction ATP-dependent DNA helicase RuvA"/>
    <property type="match status" value="1"/>
</dbReference>
<dbReference type="Gene3D" id="1.10.150.20">
    <property type="entry name" value="5' to 3' exonuclease, C-terminal subdomain"/>
    <property type="match status" value="1"/>
</dbReference>
<dbReference type="Gene3D" id="1.10.8.10">
    <property type="entry name" value="DNA helicase RuvA subunit, C-terminal domain"/>
    <property type="match status" value="1"/>
</dbReference>
<dbReference type="Gene3D" id="2.40.50.140">
    <property type="entry name" value="Nucleic acid-binding proteins"/>
    <property type="match status" value="1"/>
</dbReference>
<dbReference type="HAMAP" id="MF_00031">
    <property type="entry name" value="DNA_HJ_migration_RuvA"/>
    <property type="match status" value="1"/>
</dbReference>
<dbReference type="InterPro" id="IPR013849">
    <property type="entry name" value="DNA_helicase_Holl-junc_RuvA_I"/>
</dbReference>
<dbReference type="InterPro" id="IPR003583">
    <property type="entry name" value="Hlx-hairpin-Hlx_DNA-bd_motif"/>
</dbReference>
<dbReference type="InterPro" id="IPR012340">
    <property type="entry name" value="NA-bd_OB-fold"/>
</dbReference>
<dbReference type="InterPro" id="IPR000085">
    <property type="entry name" value="RuvA"/>
</dbReference>
<dbReference type="InterPro" id="IPR010994">
    <property type="entry name" value="RuvA_2-like"/>
</dbReference>
<dbReference type="InterPro" id="IPR011114">
    <property type="entry name" value="RuvA_C"/>
</dbReference>
<dbReference type="InterPro" id="IPR036267">
    <property type="entry name" value="RuvA_C_sf"/>
</dbReference>
<dbReference type="NCBIfam" id="TIGR00084">
    <property type="entry name" value="ruvA"/>
    <property type="match status" value="1"/>
</dbReference>
<dbReference type="Pfam" id="PF14520">
    <property type="entry name" value="HHH_5"/>
    <property type="match status" value="1"/>
</dbReference>
<dbReference type="Pfam" id="PF07499">
    <property type="entry name" value="RuvA_C"/>
    <property type="match status" value="1"/>
</dbReference>
<dbReference type="Pfam" id="PF01330">
    <property type="entry name" value="RuvA_N"/>
    <property type="match status" value="1"/>
</dbReference>
<dbReference type="SMART" id="SM00278">
    <property type="entry name" value="HhH1"/>
    <property type="match status" value="2"/>
</dbReference>
<dbReference type="SUPFAM" id="SSF46929">
    <property type="entry name" value="DNA helicase RuvA subunit, C-terminal domain"/>
    <property type="match status" value="1"/>
</dbReference>
<dbReference type="SUPFAM" id="SSF50249">
    <property type="entry name" value="Nucleic acid-binding proteins"/>
    <property type="match status" value="1"/>
</dbReference>
<dbReference type="SUPFAM" id="SSF47781">
    <property type="entry name" value="RuvA domain 2-like"/>
    <property type="match status" value="1"/>
</dbReference>
<feature type="chain" id="PRO_1000074421" description="Holliday junction branch migration complex subunit RuvA">
    <location>
        <begin position="1"/>
        <end position="203"/>
    </location>
</feature>
<feature type="region of interest" description="Domain I" evidence="1">
    <location>
        <begin position="1"/>
        <end position="64"/>
    </location>
</feature>
<feature type="region of interest" description="Domain II" evidence="1">
    <location>
        <begin position="65"/>
        <end position="142"/>
    </location>
</feature>
<feature type="region of interest" description="Flexible linker" evidence="1">
    <location>
        <begin position="143"/>
        <end position="154"/>
    </location>
</feature>
<feature type="region of interest" description="Domain III" evidence="1">
    <location>
        <begin position="155"/>
        <end position="203"/>
    </location>
</feature>
<reference key="1">
    <citation type="submission" date="2008-02" db="EMBL/GenBank/DDBJ databases">
        <title>Complete sequence of Escherichia coli C str. ATCC 8739.</title>
        <authorList>
            <person name="Copeland A."/>
            <person name="Lucas S."/>
            <person name="Lapidus A."/>
            <person name="Glavina del Rio T."/>
            <person name="Dalin E."/>
            <person name="Tice H."/>
            <person name="Bruce D."/>
            <person name="Goodwin L."/>
            <person name="Pitluck S."/>
            <person name="Kiss H."/>
            <person name="Brettin T."/>
            <person name="Detter J.C."/>
            <person name="Han C."/>
            <person name="Kuske C.R."/>
            <person name="Schmutz J."/>
            <person name="Larimer F."/>
            <person name="Land M."/>
            <person name="Hauser L."/>
            <person name="Kyrpides N."/>
            <person name="Mikhailova N."/>
            <person name="Ingram L."/>
            <person name="Richardson P."/>
        </authorList>
    </citation>
    <scope>NUCLEOTIDE SEQUENCE [LARGE SCALE GENOMIC DNA]</scope>
    <source>
        <strain>ATCC 8739 / DSM 1576 / NBRC 3972 / NCIMB 8545 / WDCM 00012 / Crooks</strain>
    </source>
</reference>
<accession>B1J0M7</accession>